<keyword id="KW-0007">Acetylation</keyword>
<keyword id="KW-0963">Cytoplasm</keyword>
<keyword id="KW-0903">Direct protein sequencing</keyword>
<keyword id="KW-0456">Lyase</keyword>
<keyword id="KW-0479">Metal-binding</keyword>
<keyword id="KW-1185">Reference proteome</keyword>
<keyword id="KW-0862">Zinc</keyword>
<dbReference type="EC" id="4.2.1.1" evidence="2"/>
<dbReference type="EC" id="4.2.1.69" evidence="2"/>
<dbReference type="PIR" id="A01140">
    <property type="entry name" value="CRHO1D"/>
</dbReference>
<dbReference type="FunCoup" id="P00917">
    <property type="interactions" value="349"/>
</dbReference>
<dbReference type="STRING" id="9796.ENSECAP00000007854"/>
<dbReference type="BindingDB" id="P00917"/>
<dbReference type="ChEMBL" id="CHEMBL4105955"/>
<dbReference type="PaxDb" id="9796-ENSECAP00000007854"/>
<dbReference type="PeptideAtlas" id="P00917"/>
<dbReference type="InParanoid" id="P00917"/>
<dbReference type="Proteomes" id="UP000002281">
    <property type="component" value="Unplaced"/>
</dbReference>
<dbReference type="GO" id="GO:0005737">
    <property type="term" value="C:cytoplasm"/>
    <property type="evidence" value="ECO:0000318"/>
    <property type="project" value="GO_Central"/>
</dbReference>
<dbReference type="GO" id="GO:0004089">
    <property type="term" value="F:carbonate dehydratase activity"/>
    <property type="evidence" value="ECO:0000250"/>
    <property type="project" value="UniProtKB"/>
</dbReference>
<dbReference type="GO" id="GO:0018820">
    <property type="term" value="F:cyanamide hydratase activity"/>
    <property type="evidence" value="ECO:0000250"/>
    <property type="project" value="UniProtKB"/>
</dbReference>
<dbReference type="GO" id="GO:0008270">
    <property type="term" value="F:zinc ion binding"/>
    <property type="evidence" value="ECO:0007669"/>
    <property type="project" value="InterPro"/>
</dbReference>
<dbReference type="FunFam" id="3.10.200.10:FF:000001">
    <property type="entry name" value="Carbonic anhydrase 2"/>
    <property type="match status" value="1"/>
</dbReference>
<dbReference type="Gene3D" id="3.10.200.10">
    <property type="entry name" value="Alpha carbonic anhydrase"/>
    <property type="match status" value="1"/>
</dbReference>
<dbReference type="InterPro" id="IPR001148">
    <property type="entry name" value="CA_dom"/>
</dbReference>
<dbReference type="InterPro" id="IPR036398">
    <property type="entry name" value="CA_dom_sf"/>
</dbReference>
<dbReference type="InterPro" id="IPR023561">
    <property type="entry name" value="Carbonic_anhydrase_a-class"/>
</dbReference>
<dbReference type="InterPro" id="IPR018338">
    <property type="entry name" value="Carbonic_anhydrase_a-class_CS"/>
</dbReference>
<dbReference type="PANTHER" id="PTHR18952">
    <property type="entry name" value="CARBONIC ANHYDRASE"/>
    <property type="match status" value="1"/>
</dbReference>
<dbReference type="PANTHER" id="PTHR18952:SF282">
    <property type="entry name" value="CARBONIC ANHYDRASE 1"/>
    <property type="match status" value="1"/>
</dbReference>
<dbReference type="Pfam" id="PF00194">
    <property type="entry name" value="Carb_anhydrase"/>
    <property type="match status" value="1"/>
</dbReference>
<dbReference type="SMART" id="SM01057">
    <property type="entry name" value="Carb_anhydrase"/>
    <property type="match status" value="1"/>
</dbReference>
<dbReference type="SUPFAM" id="SSF51069">
    <property type="entry name" value="Carbonic anhydrase"/>
    <property type="match status" value="1"/>
</dbReference>
<dbReference type="PROSITE" id="PS00162">
    <property type="entry name" value="ALPHA_CA_1"/>
    <property type="match status" value="1"/>
</dbReference>
<dbReference type="PROSITE" id="PS51144">
    <property type="entry name" value="ALPHA_CA_2"/>
    <property type="match status" value="1"/>
</dbReference>
<gene>
    <name type="primary">CA1</name>
</gene>
<accession>P00917</accession>
<reference key="1">
    <citation type="journal article" date="1980" name="J. Biol. Chem.">
        <title>Sequence of the low activity equine erythrocyte carbonic anhydrase and delineation of the amino acid substitutions in various polymorphic forms.</title>
        <authorList>
            <person name="Jabusch J.R."/>
            <person name="Bray R.P."/>
            <person name="Deutsch H.F."/>
        </authorList>
    </citation>
    <scope>PROTEIN SEQUENCE OF 2-261</scope>
    <scope>VARIANTS ASP-55; GLY-66; GLY-82; PHE-84; HIS-116; GLY-158; ARG-184; TYR-213; ARG-223 AND ALA-225</scope>
</reference>
<sequence length="261" mass="29025">MAHSDWGYDSPNGPZEWVKLYPIANGNNQSPIDIKTSETKHDTSLKPFSVSYDPATAKEIVNVGHSFQVKFEDSDNRSVLKDGPLPGSYRLVQFHFHWGSTDDYGSEHTVDGVKYSAELHLVHWNSSKYSSFDEASSQADGLAILGVLMKVGEANPKLQKVLDALNEVKTKGKKAPFKNFDPSSLLPSSPDYWTYSGSLTHPPLYESVTWIVCKENISISSQQLSQFRSLLSNVEGGKAVPIQHNNRPPQPLKGRTVRAFF</sequence>
<name>CAH1_HORSE</name>
<evidence type="ECO:0000250" key="1">
    <source>
        <dbReference type="UniProtKB" id="B0BNN3"/>
    </source>
</evidence>
<evidence type="ECO:0000250" key="2">
    <source>
        <dbReference type="UniProtKB" id="P00915"/>
    </source>
</evidence>
<evidence type="ECO:0000250" key="3">
    <source>
        <dbReference type="UniProtKB" id="P00918"/>
    </source>
</evidence>
<evidence type="ECO:0000255" key="4">
    <source>
        <dbReference type="PROSITE-ProRule" id="PRU01134"/>
    </source>
</evidence>
<evidence type="ECO:0000269" key="5">
    <source>
    </source>
</evidence>
<evidence type="ECO:0000305" key="6"/>
<organism>
    <name type="scientific">Equus caballus</name>
    <name type="common">Horse</name>
    <dbReference type="NCBI Taxonomy" id="9796"/>
    <lineage>
        <taxon>Eukaryota</taxon>
        <taxon>Metazoa</taxon>
        <taxon>Chordata</taxon>
        <taxon>Craniata</taxon>
        <taxon>Vertebrata</taxon>
        <taxon>Euteleostomi</taxon>
        <taxon>Mammalia</taxon>
        <taxon>Eutheria</taxon>
        <taxon>Laurasiatheria</taxon>
        <taxon>Perissodactyla</taxon>
        <taxon>Equidae</taxon>
        <taxon>Equus</taxon>
    </lineage>
</organism>
<protein>
    <recommendedName>
        <fullName>Carbonic anhydrase 1</fullName>
        <ecNumber evidence="2">4.2.1.1</ecNumber>
    </recommendedName>
    <alternativeName>
        <fullName>Carbonate dehydratase I</fullName>
    </alternativeName>
    <alternativeName>
        <fullName>Carbonic anhydrase I</fullName>
        <shortName>CA-I</shortName>
    </alternativeName>
    <alternativeName>
        <fullName>Cyanamide hydratase CA1</fullName>
        <ecNumber evidence="2">4.2.1.69</ecNumber>
    </alternativeName>
</protein>
<feature type="initiator methionine" description="Removed" evidence="2 5">
    <location>
        <position position="1"/>
    </location>
</feature>
<feature type="chain" id="PRO_0000077408" description="Carbonic anhydrase 1">
    <location>
        <begin position="2"/>
        <end position="261"/>
    </location>
</feature>
<feature type="domain" description="Alpha-carbonic anhydrase" evidence="4">
    <location>
        <begin position="4"/>
        <end position="261"/>
    </location>
</feature>
<feature type="active site" description="Proton donor/acceptor" evidence="3">
    <location>
        <position position="65"/>
    </location>
</feature>
<feature type="binding site" evidence="2">
    <location>
        <position position="95"/>
    </location>
    <ligand>
        <name>Zn(2+)</name>
        <dbReference type="ChEBI" id="CHEBI:29105"/>
        <note>catalytic</note>
    </ligand>
</feature>
<feature type="binding site" evidence="2">
    <location>
        <position position="97"/>
    </location>
    <ligand>
        <name>Zn(2+)</name>
        <dbReference type="ChEBI" id="CHEBI:29105"/>
        <note>catalytic</note>
    </ligand>
</feature>
<feature type="binding site" evidence="2">
    <location>
        <position position="120"/>
    </location>
    <ligand>
        <name>Zn(2+)</name>
        <dbReference type="ChEBI" id="CHEBI:29105"/>
        <note>catalytic</note>
    </ligand>
</feature>
<feature type="binding site" evidence="3">
    <location>
        <begin position="200"/>
        <end position="201"/>
    </location>
    <ligand>
        <name>substrate</name>
    </ligand>
</feature>
<feature type="binding site" evidence="2">
    <location>
        <position position="200"/>
    </location>
    <ligand>
        <name>substrate</name>
    </ligand>
</feature>
<feature type="modified residue" description="N-acetylalanine" evidence="2">
    <location>
        <position position="2"/>
    </location>
</feature>
<feature type="sequence variant" description="In isozyme T." evidence="5">
    <original>A</original>
    <variation>D</variation>
    <location>
        <position position="55"/>
    </location>
</feature>
<feature type="sequence variant" description="In homogeneous D isozyme." evidence="5">
    <original>S</original>
    <variation>G</variation>
    <location>
        <position position="66"/>
    </location>
</feature>
<feature type="sequence variant" description="In isozyme A2." evidence="5">
    <original>D</original>
    <variation>G</variation>
    <location>
        <position position="82"/>
    </location>
</feature>
<feature type="sequence variant" description="In isozyme A2." evidence="5">
    <original>P</original>
    <variation>F</variation>
    <location>
        <position position="84"/>
    </location>
</feature>
<feature type="sequence variant" description="In homogeneous D isozyme." evidence="5">
    <original>S</original>
    <variation>H</variation>
    <location>
        <position position="116"/>
    </location>
</feature>
<feature type="sequence variant" description="In homogeneous D isozyme." evidence="5">
    <original>L</original>
    <variation>G</variation>
    <location>
        <position position="158"/>
    </location>
</feature>
<feature type="sequence variant" description="In isozyme A1 and isozyme B." evidence="5">
    <original>S</original>
    <variation>R</variation>
    <location>
        <position position="184"/>
    </location>
</feature>
<feature type="sequence variant" description="In homogeneous D isozyme." evidence="5">
    <original>C</original>
    <variation>Y</variation>
    <location>
        <position position="213"/>
    </location>
</feature>
<feature type="sequence variant" description="In isozyme B." evidence="5">
    <original>Q</original>
    <variation>R</variation>
    <location>
        <position position="223"/>
    </location>
</feature>
<feature type="sequence variant" description="In homogeneous D isozyme." evidence="5">
    <original>S</original>
    <variation>A</variation>
    <location>
        <position position="225"/>
    </location>
</feature>
<feature type="unsure residue" description="N or D">
    <location>
        <position position="12"/>
    </location>
</feature>
<feature type="unsure residue" description="N or D">
    <location>
        <position position="25"/>
    </location>
</feature>
<feature type="unsure residue" description="N or D">
    <location>
        <position position="27"/>
    </location>
</feature>
<feature type="unsure residue" description="N or D">
    <location>
        <position position="28"/>
    </location>
</feature>
<comment type="function">
    <text evidence="2">Catalyzes the reversible hydration of carbon dioxide. Can hydrate cyanamide to urea.</text>
</comment>
<comment type="catalytic activity">
    <reaction evidence="2">
        <text>hydrogencarbonate + H(+) = CO2 + H2O</text>
        <dbReference type="Rhea" id="RHEA:10748"/>
        <dbReference type="ChEBI" id="CHEBI:15377"/>
        <dbReference type="ChEBI" id="CHEBI:15378"/>
        <dbReference type="ChEBI" id="CHEBI:16526"/>
        <dbReference type="ChEBI" id="CHEBI:17544"/>
        <dbReference type="EC" id="4.2.1.1"/>
    </reaction>
</comment>
<comment type="catalytic activity">
    <reaction evidence="2">
        <text>urea = cyanamide + H2O</text>
        <dbReference type="Rhea" id="RHEA:23056"/>
        <dbReference type="ChEBI" id="CHEBI:15377"/>
        <dbReference type="ChEBI" id="CHEBI:16199"/>
        <dbReference type="ChEBI" id="CHEBI:16698"/>
        <dbReference type="EC" id="4.2.1.69"/>
    </reaction>
</comment>
<comment type="cofactor">
    <cofactor evidence="2">
        <name>Zn(2+)</name>
        <dbReference type="ChEBI" id="CHEBI:29105"/>
    </cofactor>
</comment>
<comment type="activity regulation">
    <text evidence="2">Inhibited by acetazolamide.</text>
</comment>
<comment type="subcellular location">
    <subcellularLocation>
        <location evidence="1">Cytoplasm</location>
    </subcellularLocation>
</comment>
<comment type="polymorphism">
    <text evidence="5">The sequence shown is that of the electrophoretically homogeneous D isozyme.</text>
</comment>
<comment type="similarity">
    <text evidence="6">Belongs to the alpha-carbonic anhydrase family.</text>
</comment>
<proteinExistence type="evidence at protein level"/>